<protein>
    <recommendedName>
        <fullName evidence="1">Heme oxygenase (staphylobilin-producing) 1</fullName>
        <ecNumber evidence="1">1.14.99.48</ecNumber>
    </recommendedName>
    <alternativeName>
        <fullName evidence="1">Heme-degrading monooxygenase 1</fullName>
    </alternativeName>
    <alternativeName>
        <fullName evidence="1">Iron-regulated surface determinant 1</fullName>
    </alternativeName>
    <alternativeName>
        <fullName evidence="1">Iron-responsive surface determinant 1</fullName>
    </alternativeName>
</protein>
<keyword id="KW-0963">Cytoplasm</keyword>
<keyword id="KW-0349">Heme</keyword>
<keyword id="KW-0408">Iron</keyword>
<keyword id="KW-0479">Metal-binding</keyword>
<keyword id="KW-0503">Monooxygenase</keyword>
<keyword id="KW-0560">Oxidoreductase</keyword>
<comment type="function">
    <text evidence="1 2">Allows bacterial pathogens to use the host heme as an iron source. Catalyzes the oxidative degradation of the heme macrocyclic porphyrin ring to the oxo-bilirubin chromophore staphylobilin (a mixture of the linear tetrapyrroles 5-oxo-delta-bilirubin and 15-oxo-beta-bilirubin) in the presence of a suitable electron donor such as ascorbate or NADPH--cytochrome P450 reductase, with subsequent release of free iron.</text>
</comment>
<comment type="catalytic activity">
    <reaction evidence="1">
        <text>heme b + 5 AH2 + 4 O2 + 2 H(+) = delta-staphylobilin + Fe(2+) + formaldehyde + 5 A + 4 H2O</text>
        <dbReference type="Rhea" id="RHEA:37039"/>
        <dbReference type="ChEBI" id="CHEBI:13193"/>
        <dbReference type="ChEBI" id="CHEBI:15377"/>
        <dbReference type="ChEBI" id="CHEBI:15378"/>
        <dbReference type="ChEBI" id="CHEBI:15379"/>
        <dbReference type="ChEBI" id="CHEBI:16842"/>
        <dbReference type="ChEBI" id="CHEBI:17499"/>
        <dbReference type="ChEBI" id="CHEBI:29033"/>
        <dbReference type="ChEBI" id="CHEBI:60344"/>
        <dbReference type="ChEBI" id="CHEBI:74361"/>
        <dbReference type="EC" id="1.14.99.48"/>
    </reaction>
</comment>
<comment type="catalytic activity">
    <reaction evidence="1">
        <text>heme b + 5 AH2 + 4 O2 + 2 H(+) = beta-staphylobilin + Fe(2+) + formaldehyde + 5 A + 4 H2O</text>
        <dbReference type="Rhea" id="RHEA:37363"/>
        <dbReference type="ChEBI" id="CHEBI:13193"/>
        <dbReference type="ChEBI" id="CHEBI:15377"/>
        <dbReference type="ChEBI" id="CHEBI:15378"/>
        <dbReference type="ChEBI" id="CHEBI:15379"/>
        <dbReference type="ChEBI" id="CHEBI:16842"/>
        <dbReference type="ChEBI" id="CHEBI:17499"/>
        <dbReference type="ChEBI" id="CHEBI:29033"/>
        <dbReference type="ChEBI" id="CHEBI:60344"/>
        <dbReference type="ChEBI" id="CHEBI:74362"/>
        <dbReference type="EC" id="1.14.99.48"/>
    </reaction>
</comment>
<comment type="subunit">
    <text evidence="1">Homodimer.</text>
</comment>
<comment type="subcellular location">
    <subcellularLocation>
        <location evidence="1">Cytoplasm</location>
    </subcellularLocation>
</comment>
<comment type="induction">
    <text evidence="2">Regulated by iron in a Fur-dependent manner and by heme.</text>
</comment>
<comment type="similarity">
    <text evidence="1">Belongs to the antibiotic biosynthesis monooxygenase family. Heme-degrading monooxygenase IsdG subfamily.</text>
</comment>
<name>HDOX1_STAAE</name>
<sequence length="107" mass="12546">MKFMAENRLTLTKGTAKDIIERFYTRHGIETLEGFDGMFVTQTLEQEDFDEVKILTVWKSKQAFTDWLKSDVFKAAHKHVRSKNEDESSPIINNKVITYDIGYSYMK</sequence>
<organism>
    <name type="scientific">Staphylococcus aureus (strain Newman)</name>
    <dbReference type="NCBI Taxonomy" id="426430"/>
    <lineage>
        <taxon>Bacteria</taxon>
        <taxon>Bacillati</taxon>
        <taxon>Bacillota</taxon>
        <taxon>Bacilli</taxon>
        <taxon>Bacillales</taxon>
        <taxon>Staphylococcaceae</taxon>
        <taxon>Staphylococcus</taxon>
    </lineage>
</organism>
<evidence type="ECO:0000255" key="1">
    <source>
        <dbReference type="HAMAP-Rule" id="MF_01272"/>
    </source>
</evidence>
<evidence type="ECO:0000269" key="2">
    <source>
    </source>
</evidence>
<dbReference type="EC" id="1.14.99.48" evidence="1"/>
<dbReference type="EMBL" id="AP009351">
    <property type="protein sequence ID" value="BAF67319.1"/>
    <property type="molecule type" value="Genomic_DNA"/>
</dbReference>
<dbReference type="RefSeq" id="WP_000670950.1">
    <property type="nucleotide sequence ID" value="NZ_JBBIAE010000001.1"/>
</dbReference>
<dbReference type="SMR" id="A6QG37"/>
<dbReference type="KEGG" id="sae:NWMN_1047"/>
<dbReference type="HOGENOM" id="CLU_141544_2_1_9"/>
<dbReference type="BRENDA" id="1.14.99.48">
    <property type="organism ID" value="3352"/>
</dbReference>
<dbReference type="Proteomes" id="UP000006386">
    <property type="component" value="Chromosome"/>
</dbReference>
<dbReference type="GO" id="GO:0005737">
    <property type="term" value="C:cytoplasm"/>
    <property type="evidence" value="ECO:0007669"/>
    <property type="project" value="UniProtKB-SubCell"/>
</dbReference>
<dbReference type="GO" id="GO:0020037">
    <property type="term" value="F:heme binding"/>
    <property type="evidence" value="ECO:0007669"/>
    <property type="project" value="UniProtKB-UniRule"/>
</dbReference>
<dbReference type="GO" id="GO:0004392">
    <property type="term" value="F:heme oxygenase (decyclizing) activity"/>
    <property type="evidence" value="ECO:0007669"/>
    <property type="project" value="UniProtKB-UniRule"/>
</dbReference>
<dbReference type="GO" id="GO:0005506">
    <property type="term" value="F:iron ion binding"/>
    <property type="evidence" value="ECO:0007669"/>
    <property type="project" value="UniProtKB-UniRule"/>
</dbReference>
<dbReference type="GO" id="GO:0042167">
    <property type="term" value="P:heme catabolic process"/>
    <property type="evidence" value="ECO:0007669"/>
    <property type="project" value="UniProtKB-UniRule"/>
</dbReference>
<dbReference type="GO" id="GO:0033212">
    <property type="term" value="P:iron import into cell"/>
    <property type="evidence" value="ECO:0007669"/>
    <property type="project" value="InterPro"/>
</dbReference>
<dbReference type="Gene3D" id="3.30.70.100">
    <property type="match status" value="1"/>
</dbReference>
<dbReference type="HAMAP" id="MF_01272">
    <property type="entry name" value="Heme_degrading_monooxygenase"/>
    <property type="match status" value="1"/>
</dbReference>
<dbReference type="InterPro" id="IPR007138">
    <property type="entry name" value="ABM_dom"/>
</dbReference>
<dbReference type="InterPro" id="IPR011008">
    <property type="entry name" value="Dimeric_a/b-barrel"/>
</dbReference>
<dbReference type="InterPro" id="IPR050404">
    <property type="entry name" value="Heme-degrading_MO"/>
</dbReference>
<dbReference type="InterPro" id="IPR023953">
    <property type="entry name" value="IsdG"/>
</dbReference>
<dbReference type="NCBIfam" id="NF009837">
    <property type="entry name" value="PRK13312.1"/>
    <property type="match status" value="1"/>
</dbReference>
<dbReference type="PANTHER" id="PTHR34474:SF4">
    <property type="entry name" value="HEME OXYGENASE (STAPHYLOBILIN-PRODUCING) 1"/>
    <property type="match status" value="1"/>
</dbReference>
<dbReference type="PANTHER" id="PTHR34474">
    <property type="entry name" value="SIGNAL TRANSDUCTION PROTEIN TRAP"/>
    <property type="match status" value="1"/>
</dbReference>
<dbReference type="Pfam" id="PF03992">
    <property type="entry name" value="ABM"/>
    <property type="match status" value="1"/>
</dbReference>
<dbReference type="SUPFAM" id="SSF54909">
    <property type="entry name" value="Dimeric alpha+beta barrel"/>
    <property type="match status" value="1"/>
</dbReference>
<dbReference type="PROSITE" id="PS51725">
    <property type="entry name" value="ABM"/>
    <property type="match status" value="1"/>
</dbReference>
<reference key="1">
    <citation type="journal article" date="2008" name="J. Bacteriol.">
        <title>Genome sequence of Staphylococcus aureus strain Newman and comparative analysis of staphylococcal genomes: polymorphism and evolution of two major pathogenicity islands.</title>
        <authorList>
            <person name="Baba T."/>
            <person name="Bae T."/>
            <person name="Schneewind O."/>
            <person name="Takeuchi F."/>
            <person name="Hiramatsu K."/>
        </authorList>
    </citation>
    <scope>NUCLEOTIDE SEQUENCE [LARGE SCALE GENOMIC DNA]</scope>
    <source>
        <strain>Newman</strain>
    </source>
</reference>
<reference key="2">
    <citation type="journal article" date="2008" name="Mol. Microbiol.">
        <title>Staphylococcus aureus haem oxygenases are differentially regulated by iron and haem.</title>
        <authorList>
            <person name="Reniere M.L."/>
            <person name="Skaar E.P."/>
        </authorList>
    </citation>
    <scope>FUNCTION</scope>
    <scope>INDUCTION</scope>
</reference>
<feature type="chain" id="PRO_0000421865" description="Heme oxygenase (staphylobilin-producing) 1">
    <location>
        <begin position="1"/>
        <end position="107"/>
    </location>
</feature>
<feature type="domain" description="ABM" evidence="1">
    <location>
        <begin position="3"/>
        <end position="92"/>
    </location>
</feature>
<feature type="binding site" evidence="1">
    <location>
        <position position="7"/>
    </location>
    <ligand>
        <name>Fe cation</name>
        <dbReference type="ChEBI" id="CHEBI:24875"/>
    </ligand>
</feature>
<feature type="binding site" evidence="1">
    <location>
        <begin position="22"/>
        <end position="29"/>
    </location>
    <ligand>
        <name>heme</name>
        <dbReference type="ChEBI" id="CHEBI:30413"/>
    </ligand>
</feature>
<feature type="binding site" description="axial binding residue" evidence="1">
    <location>
        <position position="77"/>
    </location>
    <ligand>
        <name>heme</name>
        <dbReference type="ChEBI" id="CHEBI:30413"/>
    </ligand>
    <ligandPart>
        <name>Fe</name>
        <dbReference type="ChEBI" id="CHEBI:18248"/>
    </ligandPart>
</feature>
<feature type="site" description="Transition state stabilizer" evidence="1">
    <location>
        <position position="67"/>
    </location>
</feature>
<accession>A6QG37</accession>
<gene>
    <name type="primary">isdG</name>
    <name type="ordered locus">NWMN_1047</name>
</gene>
<proteinExistence type="evidence at transcript level"/>